<proteinExistence type="inferred from homology"/>
<protein>
    <recommendedName>
        <fullName evidence="1">5'-nucleotidase SurE</fullName>
        <ecNumber evidence="1">3.1.3.5</ecNumber>
    </recommendedName>
    <alternativeName>
        <fullName evidence="1">Nucleoside 5'-monophosphate phosphohydrolase</fullName>
    </alternativeName>
</protein>
<feature type="chain" id="PRO_1000092044" description="5'-nucleotidase SurE">
    <location>
        <begin position="1"/>
        <end position="252"/>
    </location>
</feature>
<feature type="binding site" evidence="1">
    <location>
        <position position="8"/>
    </location>
    <ligand>
        <name>a divalent metal cation</name>
        <dbReference type="ChEBI" id="CHEBI:60240"/>
    </ligand>
</feature>
<feature type="binding site" evidence="1">
    <location>
        <position position="9"/>
    </location>
    <ligand>
        <name>a divalent metal cation</name>
        <dbReference type="ChEBI" id="CHEBI:60240"/>
    </ligand>
</feature>
<feature type="binding site" evidence="1">
    <location>
        <position position="39"/>
    </location>
    <ligand>
        <name>a divalent metal cation</name>
        <dbReference type="ChEBI" id="CHEBI:60240"/>
    </ligand>
</feature>
<feature type="binding site" evidence="1">
    <location>
        <position position="95"/>
    </location>
    <ligand>
        <name>a divalent metal cation</name>
        <dbReference type="ChEBI" id="CHEBI:60240"/>
    </ligand>
</feature>
<dbReference type="EC" id="3.1.3.5" evidence="1"/>
<dbReference type="EMBL" id="CP000923">
    <property type="protein sequence ID" value="ABY92872.1"/>
    <property type="molecule type" value="Genomic_DNA"/>
</dbReference>
<dbReference type="RefSeq" id="WP_003867979.1">
    <property type="nucleotide sequence ID" value="NC_010320.1"/>
</dbReference>
<dbReference type="SMR" id="B0K177"/>
<dbReference type="KEGG" id="tex:Teth514_1585"/>
<dbReference type="HOGENOM" id="CLU_045192_1_3_9"/>
<dbReference type="Proteomes" id="UP000002155">
    <property type="component" value="Chromosome"/>
</dbReference>
<dbReference type="GO" id="GO:0005737">
    <property type="term" value="C:cytoplasm"/>
    <property type="evidence" value="ECO:0007669"/>
    <property type="project" value="UniProtKB-SubCell"/>
</dbReference>
<dbReference type="GO" id="GO:0008254">
    <property type="term" value="F:3'-nucleotidase activity"/>
    <property type="evidence" value="ECO:0007669"/>
    <property type="project" value="TreeGrafter"/>
</dbReference>
<dbReference type="GO" id="GO:0008253">
    <property type="term" value="F:5'-nucleotidase activity"/>
    <property type="evidence" value="ECO:0007669"/>
    <property type="project" value="UniProtKB-UniRule"/>
</dbReference>
<dbReference type="GO" id="GO:0004309">
    <property type="term" value="F:exopolyphosphatase activity"/>
    <property type="evidence" value="ECO:0007669"/>
    <property type="project" value="TreeGrafter"/>
</dbReference>
<dbReference type="GO" id="GO:0046872">
    <property type="term" value="F:metal ion binding"/>
    <property type="evidence" value="ECO:0007669"/>
    <property type="project" value="UniProtKB-UniRule"/>
</dbReference>
<dbReference type="GO" id="GO:0000166">
    <property type="term" value="F:nucleotide binding"/>
    <property type="evidence" value="ECO:0007669"/>
    <property type="project" value="UniProtKB-KW"/>
</dbReference>
<dbReference type="FunFam" id="3.40.1210.10:FF:000001">
    <property type="entry name" value="5'/3'-nucleotidase SurE"/>
    <property type="match status" value="1"/>
</dbReference>
<dbReference type="Gene3D" id="3.40.1210.10">
    <property type="entry name" value="Survival protein SurE-like phosphatase/nucleotidase"/>
    <property type="match status" value="1"/>
</dbReference>
<dbReference type="HAMAP" id="MF_00060">
    <property type="entry name" value="SurE"/>
    <property type="match status" value="1"/>
</dbReference>
<dbReference type="InterPro" id="IPR030048">
    <property type="entry name" value="SurE"/>
</dbReference>
<dbReference type="InterPro" id="IPR002828">
    <property type="entry name" value="SurE-like_Pase/nucleotidase"/>
</dbReference>
<dbReference type="InterPro" id="IPR036523">
    <property type="entry name" value="SurE-like_sf"/>
</dbReference>
<dbReference type="NCBIfam" id="NF001490">
    <property type="entry name" value="PRK00346.1-4"/>
    <property type="match status" value="1"/>
</dbReference>
<dbReference type="NCBIfam" id="NF001492">
    <property type="entry name" value="PRK00346.2-2"/>
    <property type="match status" value="1"/>
</dbReference>
<dbReference type="NCBIfam" id="TIGR00087">
    <property type="entry name" value="surE"/>
    <property type="match status" value="1"/>
</dbReference>
<dbReference type="PANTHER" id="PTHR30457">
    <property type="entry name" value="5'-NUCLEOTIDASE SURE"/>
    <property type="match status" value="1"/>
</dbReference>
<dbReference type="PANTHER" id="PTHR30457:SF12">
    <property type="entry name" value="5'_3'-NUCLEOTIDASE SURE"/>
    <property type="match status" value="1"/>
</dbReference>
<dbReference type="Pfam" id="PF01975">
    <property type="entry name" value="SurE"/>
    <property type="match status" value="1"/>
</dbReference>
<dbReference type="SUPFAM" id="SSF64167">
    <property type="entry name" value="SurE-like"/>
    <property type="match status" value="1"/>
</dbReference>
<reference key="1">
    <citation type="submission" date="2008-01" db="EMBL/GenBank/DDBJ databases">
        <title>Complete sequence of Thermoanaerobacter sp. X514.</title>
        <authorList>
            <consortium name="US DOE Joint Genome Institute"/>
            <person name="Copeland A."/>
            <person name="Lucas S."/>
            <person name="Lapidus A."/>
            <person name="Barry K."/>
            <person name="Glavina del Rio T."/>
            <person name="Dalin E."/>
            <person name="Tice H."/>
            <person name="Pitluck S."/>
            <person name="Bruce D."/>
            <person name="Goodwin L."/>
            <person name="Saunders E."/>
            <person name="Brettin T."/>
            <person name="Detter J.C."/>
            <person name="Han C."/>
            <person name="Schmutz J."/>
            <person name="Larimer F."/>
            <person name="Land M."/>
            <person name="Hauser L."/>
            <person name="Kyrpides N."/>
            <person name="Kim E."/>
            <person name="Hemme C."/>
            <person name="Fields M.W."/>
            <person name="He Z."/>
            <person name="Zhou J."/>
            <person name="Richardson P."/>
        </authorList>
    </citation>
    <scope>NUCLEOTIDE SEQUENCE [LARGE SCALE GENOMIC DNA]</scope>
    <source>
        <strain>X514</strain>
    </source>
</reference>
<organism>
    <name type="scientific">Thermoanaerobacter sp. (strain X514)</name>
    <dbReference type="NCBI Taxonomy" id="399726"/>
    <lineage>
        <taxon>Bacteria</taxon>
        <taxon>Bacillati</taxon>
        <taxon>Bacillota</taxon>
        <taxon>Clostridia</taxon>
        <taxon>Thermoanaerobacterales</taxon>
        <taxon>Thermoanaerobacteraceae</taxon>
        <taxon>Thermoanaerobacter</taxon>
    </lineage>
</organism>
<accession>B0K177</accession>
<gene>
    <name evidence="1" type="primary">surE</name>
    <name type="ordered locus">Teth514_1585</name>
</gene>
<name>SURE_THEPX</name>
<sequence length="252" mass="28287">MKILLTNDDGVQGLGMLKLAEYLKDKYKVTVVAPEKERSAISHAITLHKPLRLKKVKEEDSLKIYAINGTPSDCVKLGIEVVLREKPDIVISGINEGLNLGTDILYSGTVSAAIEAAIYGIPAIAVSRAETADIEDRRIYKFLENLIEKVLEKGLPKNTLLNVNIPDFKKGIKGVKATILGKSIYIETFQKNYDPRGKEYYWMAGKISEIEKDERTDIVSVKEGYISITPIHFDLTEYNMINILNSWDIKIE</sequence>
<keyword id="KW-0963">Cytoplasm</keyword>
<keyword id="KW-0378">Hydrolase</keyword>
<keyword id="KW-0479">Metal-binding</keyword>
<keyword id="KW-0547">Nucleotide-binding</keyword>
<comment type="function">
    <text evidence="1">Nucleotidase that shows phosphatase activity on nucleoside 5'-monophosphates.</text>
</comment>
<comment type="catalytic activity">
    <reaction evidence="1">
        <text>a ribonucleoside 5'-phosphate + H2O = a ribonucleoside + phosphate</text>
        <dbReference type="Rhea" id="RHEA:12484"/>
        <dbReference type="ChEBI" id="CHEBI:15377"/>
        <dbReference type="ChEBI" id="CHEBI:18254"/>
        <dbReference type="ChEBI" id="CHEBI:43474"/>
        <dbReference type="ChEBI" id="CHEBI:58043"/>
        <dbReference type="EC" id="3.1.3.5"/>
    </reaction>
</comment>
<comment type="cofactor">
    <cofactor evidence="1">
        <name>a divalent metal cation</name>
        <dbReference type="ChEBI" id="CHEBI:60240"/>
    </cofactor>
    <text evidence="1">Binds 1 divalent metal cation per subunit.</text>
</comment>
<comment type="subcellular location">
    <subcellularLocation>
        <location evidence="1">Cytoplasm</location>
    </subcellularLocation>
</comment>
<comment type="similarity">
    <text evidence="1">Belongs to the SurE nucleotidase family.</text>
</comment>
<evidence type="ECO:0000255" key="1">
    <source>
        <dbReference type="HAMAP-Rule" id="MF_00060"/>
    </source>
</evidence>